<organism>
    <name type="scientific">Paraburkholderia xenovorans (strain LB400)</name>
    <dbReference type="NCBI Taxonomy" id="266265"/>
    <lineage>
        <taxon>Bacteria</taxon>
        <taxon>Pseudomonadati</taxon>
        <taxon>Pseudomonadota</taxon>
        <taxon>Betaproteobacteria</taxon>
        <taxon>Burkholderiales</taxon>
        <taxon>Burkholderiaceae</taxon>
        <taxon>Paraburkholderia</taxon>
    </lineage>
</organism>
<sequence>MSAARGAVIWMTGLSGAGKSTLANALHLRLKEAGQAAIVLDGDVLRRGLNADLGFTPEDRTENLRRVAHVAALFMQQGFVVIAAVISPEHRHRRAAREIVGEGFVEVFVNAPLQVCEARDAKGLYARARRGEIAHFTGISDPFEAPLAADLVIETDRMPVNEGVDRLLAHLVTMGRVSG</sequence>
<proteinExistence type="inferred from homology"/>
<protein>
    <recommendedName>
        <fullName evidence="1">Adenylyl-sulfate kinase</fullName>
        <ecNumber evidence="1">2.7.1.25</ecNumber>
    </recommendedName>
    <alternativeName>
        <fullName evidence="1">APS kinase</fullName>
    </alternativeName>
    <alternativeName>
        <fullName evidence="1">ATP adenosine-5'-phosphosulfate 3'-phosphotransferase</fullName>
    </alternativeName>
    <alternativeName>
        <fullName evidence="1">Adenosine-5'-phosphosulfate kinase</fullName>
    </alternativeName>
</protein>
<dbReference type="EC" id="2.7.1.25" evidence="1"/>
<dbReference type="EMBL" id="CP000270">
    <property type="protein sequence ID" value="ABE30492.1"/>
    <property type="molecule type" value="Genomic_DNA"/>
</dbReference>
<dbReference type="RefSeq" id="WP_011488145.1">
    <property type="nucleotide sequence ID" value="NC_007951.1"/>
</dbReference>
<dbReference type="SMR" id="Q13ZJ7"/>
<dbReference type="STRING" id="266265.Bxe_A2481"/>
<dbReference type="KEGG" id="bxb:DR64_172"/>
<dbReference type="KEGG" id="bxe:Bxe_A2481"/>
<dbReference type="PATRIC" id="fig|266265.5.peg.2050"/>
<dbReference type="eggNOG" id="COG0529">
    <property type="taxonomic scope" value="Bacteria"/>
</dbReference>
<dbReference type="OrthoDB" id="9804504at2"/>
<dbReference type="UniPathway" id="UPA00140">
    <property type="reaction ID" value="UER00205"/>
</dbReference>
<dbReference type="Proteomes" id="UP000001817">
    <property type="component" value="Chromosome 1"/>
</dbReference>
<dbReference type="GO" id="GO:0005737">
    <property type="term" value="C:cytoplasm"/>
    <property type="evidence" value="ECO:0007669"/>
    <property type="project" value="TreeGrafter"/>
</dbReference>
<dbReference type="GO" id="GO:0004020">
    <property type="term" value="F:adenylylsulfate kinase activity"/>
    <property type="evidence" value="ECO:0007669"/>
    <property type="project" value="UniProtKB-UniRule"/>
</dbReference>
<dbReference type="GO" id="GO:0005524">
    <property type="term" value="F:ATP binding"/>
    <property type="evidence" value="ECO:0007669"/>
    <property type="project" value="UniProtKB-UniRule"/>
</dbReference>
<dbReference type="GO" id="GO:0004781">
    <property type="term" value="F:sulfate adenylyltransferase (ATP) activity"/>
    <property type="evidence" value="ECO:0007669"/>
    <property type="project" value="TreeGrafter"/>
</dbReference>
<dbReference type="GO" id="GO:0070814">
    <property type="term" value="P:hydrogen sulfide biosynthetic process"/>
    <property type="evidence" value="ECO:0007669"/>
    <property type="project" value="UniProtKB-UniRule"/>
</dbReference>
<dbReference type="GO" id="GO:0010134">
    <property type="term" value="P:sulfate assimilation via adenylyl sulfate reduction"/>
    <property type="evidence" value="ECO:0007669"/>
    <property type="project" value="TreeGrafter"/>
</dbReference>
<dbReference type="GO" id="GO:0019379">
    <property type="term" value="P:sulfate assimilation, phosphoadenylyl sulfate reduction by phosphoadenylyl-sulfate reductase (thioredoxin)"/>
    <property type="evidence" value="ECO:0007669"/>
    <property type="project" value="TreeGrafter"/>
</dbReference>
<dbReference type="CDD" id="cd02027">
    <property type="entry name" value="APSK"/>
    <property type="match status" value="1"/>
</dbReference>
<dbReference type="Gene3D" id="3.40.50.300">
    <property type="entry name" value="P-loop containing nucleotide triphosphate hydrolases"/>
    <property type="match status" value="1"/>
</dbReference>
<dbReference type="HAMAP" id="MF_00065">
    <property type="entry name" value="Adenylyl_sulf_kinase"/>
    <property type="match status" value="1"/>
</dbReference>
<dbReference type="InterPro" id="IPR002891">
    <property type="entry name" value="APS_kinase"/>
</dbReference>
<dbReference type="InterPro" id="IPR027417">
    <property type="entry name" value="P-loop_NTPase"/>
</dbReference>
<dbReference type="InterPro" id="IPR050512">
    <property type="entry name" value="Sulf_AdTrans/APS_kinase"/>
</dbReference>
<dbReference type="NCBIfam" id="TIGR00455">
    <property type="entry name" value="apsK"/>
    <property type="match status" value="1"/>
</dbReference>
<dbReference type="NCBIfam" id="NF003013">
    <property type="entry name" value="PRK03846.1"/>
    <property type="match status" value="1"/>
</dbReference>
<dbReference type="PANTHER" id="PTHR42700">
    <property type="entry name" value="SULFATE ADENYLYLTRANSFERASE"/>
    <property type="match status" value="1"/>
</dbReference>
<dbReference type="PANTHER" id="PTHR42700:SF1">
    <property type="entry name" value="SULFATE ADENYLYLTRANSFERASE"/>
    <property type="match status" value="1"/>
</dbReference>
<dbReference type="Pfam" id="PF01583">
    <property type="entry name" value="APS_kinase"/>
    <property type="match status" value="1"/>
</dbReference>
<dbReference type="SUPFAM" id="SSF52540">
    <property type="entry name" value="P-loop containing nucleoside triphosphate hydrolases"/>
    <property type="match status" value="1"/>
</dbReference>
<reference key="1">
    <citation type="journal article" date="2006" name="Proc. Natl. Acad. Sci. U.S.A.">
        <title>Burkholderia xenovorans LB400 harbors a multi-replicon, 9.73-Mbp genome shaped for versatility.</title>
        <authorList>
            <person name="Chain P.S.G."/>
            <person name="Denef V.J."/>
            <person name="Konstantinidis K.T."/>
            <person name="Vergez L.M."/>
            <person name="Agullo L."/>
            <person name="Reyes V.L."/>
            <person name="Hauser L."/>
            <person name="Cordova M."/>
            <person name="Gomez L."/>
            <person name="Gonzalez M."/>
            <person name="Land M."/>
            <person name="Lao V."/>
            <person name="Larimer F."/>
            <person name="LiPuma J.J."/>
            <person name="Mahenthiralingam E."/>
            <person name="Malfatti S.A."/>
            <person name="Marx C.J."/>
            <person name="Parnell J.J."/>
            <person name="Ramette A."/>
            <person name="Richardson P."/>
            <person name="Seeger M."/>
            <person name="Smith D."/>
            <person name="Spilker T."/>
            <person name="Sul W.J."/>
            <person name="Tsoi T.V."/>
            <person name="Ulrich L.E."/>
            <person name="Zhulin I.B."/>
            <person name="Tiedje J.M."/>
        </authorList>
    </citation>
    <scope>NUCLEOTIDE SEQUENCE [LARGE SCALE GENOMIC DNA]</scope>
    <source>
        <strain>LB400</strain>
    </source>
</reference>
<comment type="function">
    <text evidence="1">Catalyzes the synthesis of activated sulfate.</text>
</comment>
<comment type="catalytic activity">
    <reaction evidence="1">
        <text>adenosine 5'-phosphosulfate + ATP = 3'-phosphoadenylyl sulfate + ADP + H(+)</text>
        <dbReference type="Rhea" id="RHEA:24152"/>
        <dbReference type="ChEBI" id="CHEBI:15378"/>
        <dbReference type="ChEBI" id="CHEBI:30616"/>
        <dbReference type="ChEBI" id="CHEBI:58243"/>
        <dbReference type="ChEBI" id="CHEBI:58339"/>
        <dbReference type="ChEBI" id="CHEBI:456216"/>
        <dbReference type="EC" id="2.7.1.25"/>
    </reaction>
</comment>
<comment type="pathway">
    <text evidence="1">Sulfur metabolism; hydrogen sulfide biosynthesis; sulfite from sulfate: step 2/3.</text>
</comment>
<comment type="similarity">
    <text evidence="1">Belongs to the APS kinase family.</text>
</comment>
<feature type="chain" id="PRO_1000202410" description="Adenylyl-sulfate kinase">
    <location>
        <begin position="1"/>
        <end position="179"/>
    </location>
</feature>
<feature type="active site" description="Phosphoserine intermediate" evidence="1">
    <location>
        <position position="87"/>
    </location>
</feature>
<feature type="binding site" evidence="1">
    <location>
        <begin position="13"/>
        <end position="20"/>
    </location>
    <ligand>
        <name>ATP</name>
        <dbReference type="ChEBI" id="CHEBI:30616"/>
    </ligand>
</feature>
<name>CYSC_PARXL</name>
<evidence type="ECO:0000255" key="1">
    <source>
        <dbReference type="HAMAP-Rule" id="MF_00065"/>
    </source>
</evidence>
<accession>Q13ZJ7</accession>
<gene>
    <name evidence="1" type="primary">cysC</name>
    <name type="ordered locus">Bxeno_A1954</name>
    <name type="ORF">Bxe_A2481</name>
</gene>
<keyword id="KW-0067">ATP-binding</keyword>
<keyword id="KW-0418">Kinase</keyword>
<keyword id="KW-0547">Nucleotide-binding</keyword>
<keyword id="KW-0597">Phosphoprotein</keyword>
<keyword id="KW-1185">Reference proteome</keyword>
<keyword id="KW-0808">Transferase</keyword>